<keyword id="KW-0216">Detoxification</keyword>
<keyword id="KW-1185">Reference proteome</keyword>
<keyword id="KW-0808">Transferase</keyword>
<protein>
    <recommendedName>
        <fullName evidence="4">Glutathione S-transferase D5</fullName>
        <ecNumber evidence="3">2.5.1.18</ecNumber>
    </recommendedName>
</protein>
<evidence type="ECO:0000250" key="1"/>
<evidence type="ECO:0000250" key="2">
    <source>
        <dbReference type="UniProtKB" id="P30711"/>
    </source>
</evidence>
<evidence type="ECO:0000269" key="3">
    <source>
    </source>
</evidence>
<evidence type="ECO:0000303" key="4">
    <source>
    </source>
</evidence>
<evidence type="ECO:0000312" key="5">
    <source>
        <dbReference type="FlyBase" id="FBgn0010041"/>
    </source>
</evidence>
<sequence length="216" mass="24713">MDFYYSPRGSGCRTVIMVAKALGVKLNMKLLNTLEKDQLKPEFVKLNPQHTIPTLVDNGFSIWESRAIAVYLVEKYGKDDTLFPKDPKKQALVNQRLYFDMGTLYDSFAKYYYPLFHTGKPGSDEDFKKIESSFEYLNIFLEGQNYVAGDHLTVADIAILSTVSTFEIFDFDLNKYPNVARWYANAKKVTPGWEENWKGAVELKGVFDARQAAAKQ</sequence>
<feature type="chain" id="PRO_0000185957" description="Glutathione S-transferase D5">
    <location>
        <begin position="1"/>
        <end position="216"/>
    </location>
</feature>
<feature type="domain" description="GST N-terminal">
    <location>
        <begin position="1"/>
        <end position="80"/>
    </location>
</feature>
<feature type="domain" description="GST C-terminal">
    <location>
        <begin position="86"/>
        <end position="207"/>
    </location>
</feature>
<feature type="binding site" evidence="1">
    <location>
        <begin position="50"/>
        <end position="52"/>
    </location>
    <ligand>
        <name>glutathione</name>
        <dbReference type="ChEBI" id="CHEBI:57925"/>
    </ligand>
</feature>
<feature type="binding site" evidence="1">
    <location>
        <begin position="64"/>
        <end position="66"/>
    </location>
    <ligand>
        <name>glutathione</name>
        <dbReference type="ChEBI" id="CHEBI:57925"/>
    </ligand>
</feature>
<organism>
    <name type="scientific">Drosophila melanogaster</name>
    <name type="common">Fruit fly</name>
    <dbReference type="NCBI Taxonomy" id="7227"/>
    <lineage>
        <taxon>Eukaryota</taxon>
        <taxon>Metazoa</taxon>
        <taxon>Ecdysozoa</taxon>
        <taxon>Arthropoda</taxon>
        <taxon>Hexapoda</taxon>
        <taxon>Insecta</taxon>
        <taxon>Pterygota</taxon>
        <taxon>Neoptera</taxon>
        <taxon>Endopterygota</taxon>
        <taxon>Diptera</taxon>
        <taxon>Brachycera</taxon>
        <taxon>Muscomorpha</taxon>
        <taxon>Ephydroidea</taxon>
        <taxon>Drosophilidae</taxon>
        <taxon>Drosophila</taxon>
        <taxon>Sophophora</taxon>
    </lineage>
</organism>
<gene>
    <name evidence="5" type="primary">GstD5</name>
    <name type="synonym">gstD24</name>
    <name evidence="5" type="synonym">GSTD5-5</name>
    <name evidence="5" type="ORF">CG12242</name>
</gene>
<dbReference type="EC" id="2.5.1.18" evidence="3"/>
<dbReference type="EMBL" id="M97702">
    <property type="status" value="NOT_ANNOTATED_CDS"/>
    <property type="molecule type" value="Genomic_DNA"/>
</dbReference>
<dbReference type="EMBL" id="AE014297">
    <property type="protein sequence ID" value="AAF54790.3"/>
    <property type="molecule type" value="Genomic_DNA"/>
</dbReference>
<dbReference type="PIR" id="C46681">
    <property type="entry name" value="C46681"/>
</dbReference>
<dbReference type="RefSeq" id="NP_524914.3">
    <property type="nucleotide sequence ID" value="NM_080175.3"/>
</dbReference>
<dbReference type="SMR" id="Q9VG95"/>
<dbReference type="BioGRID" id="71335">
    <property type="interactions" value="6"/>
</dbReference>
<dbReference type="FunCoup" id="Q9VG95">
    <property type="interactions" value="173"/>
</dbReference>
<dbReference type="IntAct" id="Q9VG95">
    <property type="interactions" value="6"/>
</dbReference>
<dbReference type="STRING" id="7227.FBpp0082044"/>
<dbReference type="PaxDb" id="7227-FBpp0082044"/>
<dbReference type="EnsemblMetazoa" id="FBtr0082572">
    <property type="protein sequence ID" value="FBpp0082044"/>
    <property type="gene ID" value="FBgn0010041"/>
</dbReference>
<dbReference type="GeneID" id="48338"/>
<dbReference type="KEGG" id="dme:Dmel_CG12242"/>
<dbReference type="AGR" id="FB:FBgn0010041"/>
<dbReference type="CTD" id="48338"/>
<dbReference type="FlyBase" id="FBgn0010041">
    <property type="gene designation" value="GstD5"/>
</dbReference>
<dbReference type="VEuPathDB" id="VectorBase:FBgn0010041"/>
<dbReference type="eggNOG" id="KOG0867">
    <property type="taxonomic scope" value="Eukaryota"/>
</dbReference>
<dbReference type="GeneTree" id="ENSGT00940000164816"/>
<dbReference type="HOGENOM" id="CLU_011226_2_1_1"/>
<dbReference type="InParanoid" id="Q9VG95"/>
<dbReference type="OMA" id="MFFRQDI"/>
<dbReference type="OrthoDB" id="2309723at2759"/>
<dbReference type="PhylomeDB" id="Q9VG95"/>
<dbReference type="SABIO-RK" id="Q9VG95"/>
<dbReference type="BioGRID-ORCS" id="48338">
    <property type="hits" value="0 hits in 1 CRISPR screen"/>
</dbReference>
<dbReference type="GenomeRNAi" id="48338"/>
<dbReference type="PRO" id="PR:Q9VG95"/>
<dbReference type="Proteomes" id="UP000000803">
    <property type="component" value="Chromosome 3R"/>
</dbReference>
<dbReference type="Bgee" id="FBgn0010041">
    <property type="expression patterns" value="Expressed in visual pigment cell (sensu Nematoda and Protostomia) in testis and 45 other cell types or tissues"/>
</dbReference>
<dbReference type="ExpressionAtlas" id="Q9VG95">
    <property type="expression patterns" value="baseline and differential"/>
</dbReference>
<dbReference type="GO" id="GO:0005737">
    <property type="term" value="C:cytoplasm"/>
    <property type="evidence" value="ECO:0000250"/>
    <property type="project" value="FlyBase"/>
</dbReference>
<dbReference type="GO" id="GO:0004364">
    <property type="term" value="F:glutathione transferase activity"/>
    <property type="evidence" value="ECO:0000314"/>
    <property type="project" value="FlyBase"/>
</dbReference>
<dbReference type="GO" id="GO:0006749">
    <property type="term" value="P:glutathione metabolic process"/>
    <property type="evidence" value="ECO:0000314"/>
    <property type="project" value="FlyBase"/>
</dbReference>
<dbReference type="GO" id="GO:0009636">
    <property type="term" value="P:response to toxic substance"/>
    <property type="evidence" value="ECO:0007669"/>
    <property type="project" value="UniProtKB-KW"/>
</dbReference>
<dbReference type="CDD" id="cd03177">
    <property type="entry name" value="GST_C_Delta_Epsilon"/>
    <property type="match status" value="1"/>
</dbReference>
<dbReference type="CDD" id="cd03045">
    <property type="entry name" value="GST_N_Delta_Epsilon"/>
    <property type="match status" value="1"/>
</dbReference>
<dbReference type="FunFam" id="3.40.30.10:FF:000034">
    <property type="entry name" value="glutathione S-transferase 1"/>
    <property type="match status" value="1"/>
</dbReference>
<dbReference type="FunFam" id="1.20.1050.10:FF:000007">
    <property type="entry name" value="Glutathione S-transferase 1-1"/>
    <property type="match status" value="1"/>
</dbReference>
<dbReference type="Gene3D" id="1.20.1050.10">
    <property type="match status" value="1"/>
</dbReference>
<dbReference type="Gene3D" id="3.40.30.10">
    <property type="entry name" value="Glutaredoxin"/>
    <property type="match status" value="1"/>
</dbReference>
<dbReference type="InterPro" id="IPR010987">
    <property type="entry name" value="Glutathione-S-Trfase_C-like"/>
</dbReference>
<dbReference type="InterPro" id="IPR036282">
    <property type="entry name" value="Glutathione-S-Trfase_C_sf"/>
</dbReference>
<dbReference type="InterPro" id="IPR040079">
    <property type="entry name" value="Glutathione_S-Trfase"/>
</dbReference>
<dbReference type="InterPro" id="IPR004045">
    <property type="entry name" value="Glutathione_S-Trfase_N"/>
</dbReference>
<dbReference type="InterPro" id="IPR004046">
    <property type="entry name" value="GST_C"/>
</dbReference>
<dbReference type="InterPro" id="IPR036249">
    <property type="entry name" value="Thioredoxin-like_sf"/>
</dbReference>
<dbReference type="PANTHER" id="PTHR43969">
    <property type="entry name" value="GLUTATHIONE S TRANSFERASE D10, ISOFORM A-RELATED"/>
    <property type="match status" value="1"/>
</dbReference>
<dbReference type="PANTHER" id="PTHR43969:SF9">
    <property type="entry name" value="GLUTATHIONE S TRANSFERASE D10, ISOFORM A-RELATED"/>
    <property type="match status" value="1"/>
</dbReference>
<dbReference type="Pfam" id="PF00043">
    <property type="entry name" value="GST_C"/>
    <property type="match status" value="1"/>
</dbReference>
<dbReference type="Pfam" id="PF02798">
    <property type="entry name" value="GST_N"/>
    <property type="match status" value="1"/>
</dbReference>
<dbReference type="SFLD" id="SFLDS00019">
    <property type="entry name" value="Glutathione_Transferase_(cytos"/>
    <property type="match status" value="1"/>
</dbReference>
<dbReference type="SFLD" id="SFLDG00358">
    <property type="entry name" value="Main_(cytGST)"/>
    <property type="match status" value="1"/>
</dbReference>
<dbReference type="SUPFAM" id="SSF47616">
    <property type="entry name" value="GST C-terminal domain-like"/>
    <property type="match status" value="1"/>
</dbReference>
<dbReference type="SUPFAM" id="SSF52833">
    <property type="entry name" value="Thioredoxin-like"/>
    <property type="match status" value="1"/>
</dbReference>
<dbReference type="PROSITE" id="PS50405">
    <property type="entry name" value="GST_CTER"/>
    <property type="match status" value="1"/>
</dbReference>
<dbReference type="PROSITE" id="PS50404">
    <property type="entry name" value="GST_NTER"/>
    <property type="match status" value="1"/>
</dbReference>
<proteinExistence type="evidence at protein level"/>
<name>GSTD5_DROME</name>
<accession>Q9VG95</accession>
<accession>Q9TX92</accession>
<reference key="1">
    <citation type="journal article" date="1993" name="J. Biol. Chem.">
        <title>The glutathione S-transferase D genes. A divergently organized, intronless gene family in Drosophila melanogaster.</title>
        <authorList>
            <person name="Toung Y.-P.S."/>
            <person name="Hsieh T.-S."/>
            <person name="Tu C.-P.D."/>
        </authorList>
    </citation>
    <scope>NUCLEOTIDE SEQUENCE [GENOMIC DNA]</scope>
</reference>
<reference key="2">
    <citation type="journal article" date="2000" name="Science">
        <title>The genome sequence of Drosophila melanogaster.</title>
        <authorList>
            <person name="Adams M.D."/>
            <person name="Celniker S.E."/>
            <person name="Holt R.A."/>
            <person name="Evans C.A."/>
            <person name="Gocayne J.D."/>
            <person name="Amanatides P.G."/>
            <person name="Scherer S.E."/>
            <person name="Li P.W."/>
            <person name="Hoskins R.A."/>
            <person name="Galle R.F."/>
            <person name="George R.A."/>
            <person name="Lewis S.E."/>
            <person name="Richards S."/>
            <person name="Ashburner M."/>
            <person name="Henderson S.N."/>
            <person name="Sutton G.G."/>
            <person name="Wortman J.R."/>
            <person name="Yandell M.D."/>
            <person name="Zhang Q."/>
            <person name="Chen L.X."/>
            <person name="Brandon R.C."/>
            <person name="Rogers Y.-H.C."/>
            <person name="Blazej R.G."/>
            <person name="Champe M."/>
            <person name="Pfeiffer B.D."/>
            <person name="Wan K.H."/>
            <person name="Doyle C."/>
            <person name="Baxter E.G."/>
            <person name="Helt G."/>
            <person name="Nelson C.R."/>
            <person name="Miklos G.L.G."/>
            <person name="Abril J.F."/>
            <person name="Agbayani A."/>
            <person name="An H.-J."/>
            <person name="Andrews-Pfannkoch C."/>
            <person name="Baldwin D."/>
            <person name="Ballew R.M."/>
            <person name="Basu A."/>
            <person name="Baxendale J."/>
            <person name="Bayraktaroglu L."/>
            <person name="Beasley E.M."/>
            <person name="Beeson K.Y."/>
            <person name="Benos P.V."/>
            <person name="Berman B.P."/>
            <person name="Bhandari D."/>
            <person name="Bolshakov S."/>
            <person name="Borkova D."/>
            <person name="Botchan M.R."/>
            <person name="Bouck J."/>
            <person name="Brokstein P."/>
            <person name="Brottier P."/>
            <person name="Burtis K.C."/>
            <person name="Busam D.A."/>
            <person name="Butler H."/>
            <person name="Cadieu E."/>
            <person name="Center A."/>
            <person name="Chandra I."/>
            <person name="Cherry J.M."/>
            <person name="Cawley S."/>
            <person name="Dahlke C."/>
            <person name="Davenport L.B."/>
            <person name="Davies P."/>
            <person name="de Pablos B."/>
            <person name="Delcher A."/>
            <person name="Deng Z."/>
            <person name="Mays A.D."/>
            <person name="Dew I."/>
            <person name="Dietz S.M."/>
            <person name="Dodson K."/>
            <person name="Doup L.E."/>
            <person name="Downes M."/>
            <person name="Dugan-Rocha S."/>
            <person name="Dunkov B.C."/>
            <person name="Dunn P."/>
            <person name="Durbin K.J."/>
            <person name="Evangelista C.C."/>
            <person name="Ferraz C."/>
            <person name="Ferriera S."/>
            <person name="Fleischmann W."/>
            <person name="Fosler C."/>
            <person name="Gabrielian A.E."/>
            <person name="Garg N.S."/>
            <person name="Gelbart W.M."/>
            <person name="Glasser K."/>
            <person name="Glodek A."/>
            <person name="Gong F."/>
            <person name="Gorrell J.H."/>
            <person name="Gu Z."/>
            <person name="Guan P."/>
            <person name="Harris M."/>
            <person name="Harris N.L."/>
            <person name="Harvey D.A."/>
            <person name="Heiman T.J."/>
            <person name="Hernandez J.R."/>
            <person name="Houck J."/>
            <person name="Hostin D."/>
            <person name="Houston K.A."/>
            <person name="Howland T.J."/>
            <person name="Wei M.-H."/>
            <person name="Ibegwam C."/>
            <person name="Jalali M."/>
            <person name="Kalush F."/>
            <person name="Karpen G.H."/>
            <person name="Ke Z."/>
            <person name="Kennison J.A."/>
            <person name="Ketchum K.A."/>
            <person name="Kimmel B.E."/>
            <person name="Kodira C.D."/>
            <person name="Kraft C.L."/>
            <person name="Kravitz S."/>
            <person name="Kulp D."/>
            <person name="Lai Z."/>
            <person name="Lasko P."/>
            <person name="Lei Y."/>
            <person name="Levitsky A.A."/>
            <person name="Li J.H."/>
            <person name="Li Z."/>
            <person name="Liang Y."/>
            <person name="Lin X."/>
            <person name="Liu X."/>
            <person name="Mattei B."/>
            <person name="McIntosh T.C."/>
            <person name="McLeod M.P."/>
            <person name="McPherson D."/>
            <person name="Merkulov G."/>
            <person name="Milshina N.V."/>
            <person name="Mobarry C."/>
            <person name="Morris J."/>
            <person name="Moshrefi A."/>
            <person name="Mount S.M."/>
            <person name="Moy M."/>
            <person name="Murphy B."/>
            <person name="Murphy L."/>
            <person name="Muzny D.M."/>
            <person name="Nelson D.L."/>
            <person name="Nelson D.R."/>
            <person name="Nelson K.A."/>
            <person name="Nixon K."/>
            <person name="Nusskern D.R."/>
            <person name="Pacleb J.M."/>
            <person name="Palazzolo M."/>
            <person name="Pittman G.S."/>
            <person name="Pan S."/>
            <person name="Pollard J."/>
            <person name="Puri V."/>
            <person name="Reese M.G."/>
            <person name="Reinert K."/>
            <person name="Remington K."/>
            <person name="Saunders R.D.C."/>
            <person name="Scheeler F."/>
            <person name="Shen H."/>
            <person name="Shue B.C."/>
            <person name="Siden-Kiamos I."/>
            <person name="Simpson M."/>
            <person name="Skupski M.P."/>
            <person name="Smith T.J."/>
            <person name="Spier E."/>
            <person name="Spradling A.C."/>
            <person name="Stapleton M."/>
            <person name="Strong R."/>
            <person name="Sun E."/>
            <person name="Svirskas R."/>
            <person name="Tector C."/>
            <person name="Turner R."/>
            <person name="Venter E."/>
            <person name="Wang A.H."/>
            <person name="Wang X."/>
            <person name="Wang Z.-Y."/>
            <person name="Wassarman D.A."/>
            <person name="Weinstock G.M."/>
            <person name="Weissenbach J."/>
            <person name="Williams S.M."/>
            <person name="Woodage T."/>
            <person name="Worley K.C."/>
            <person name="Wu D."/>
            <person name="Yang S."/>
            <person name="Yao Q.A."/>
            <person name="Ye J."/>
            <person name="Yeh R.-F."/>
            <person name="Zaveri J.S."/>
            <person name="Zhan M."/>
            <person name="Zhang G."/>
            <person name="Zhao Q."/>
            <person name="Zheng L."/>
            <person name="Zheng X.H."/>
            <person name="Zhong F.N."/>
            <person name="Zhong W."/>
            <person name="Zhou X."/>
            <person name="Zhu S.C."/>
            <person name="Zhu X."/>
            <person name="Smith H.O."/>
            <person name="Gibbs R.A."/>
            <person name="Myers E.W."/>
            <person name="Rubin G.M."/>
            <person name="Venter J.C."/>
        </authorList>
    </citation>
    <scope>NUCLEOTIDE SEQUENCE [LARGE SCALE GENOMIC DNA]</scope>
    <source>
        <strain>Berkeley</strain>
    </source>
</reference>
<reference key="3">
    <citation type="journal article" date="2002" name="Genome Biol.">
        <title>Annotation of the Drosophila melanogaster euchromatic genome: a systematic review.</title>
        <authorList>
            <person name="Misra S."/>
            <person name="Crosby M.A."/>
            <person name="Mungall C.J."/>
            <person name="Matthews B.B."/>
            <person name="Campbell K.S."/>
            <person name="Hradecky P."/>
            <person name="Huang Y."/>
            <person name="Kaminker J.S."/>
            <person name="Millburn G.H."/>
            <person name="Prochnik S.E."/>
            <person name="Smith C.D."/>
            <person name="Tupy J.L."/>
            <person name="Whitfield E.J."/>
            <person name="Bayraktaroglu L."/>
            <person name="Berman B.P."/>
            <person name="Bettencourt B.R."/>
            <person name="Celniker S.E."/>
            <person name="de Grey A.D.N.J."/>
            <person name="Drysdale R.A."/>
            <person name="Harris N.L."/>
            <person name="Richter J."/>
            <person name="Russo S."/>
            <person name="Schroeder A.J."/>
            <person name="Shu S.Q."/>
            <person name="Stapleton M."/>
            <person name="Yamada C."/>
            <person name="Ashburner M."/>
            <person name="Gelbart W.M."/>
            <person name="Rubin G.M."/>
            <person name="Lewis S.E."/>
        </authorList>
    </citation>
    <scope>GENOME REANNOTATION</scope>
    <source>
        <strain>Berkeley</strain>
    </source>
</reference>
<reference key="4">
    <citation type="journal article" date="2012" name="Biochem. J.">
        <title>A preliminary characterization of the cytosolic glutathione transferase proteome from Drosophila melanogaster.</title>
        <authorList>
            <person name="Saisawang C."/>
            <person name="Wongsantichon J."/>
            <person name="Ketterman A.J."/>
        </authorList>
    </citation>
    <scope>FUNCTION</scope>
    <scope>CATALYTIC ACTIVITY</scope>
    <scope>BIOPHYSICOCHEMICAL PROPERTIES</scope>
</reference>
<comment type="function">
    <text evidence="3">Conjugation of reduced glutathione to a wide number of exogenous and endogenous hydrophobic electrophiles (PubMed:22082028). May be involved in detoxification (PubMed:22082028).</text>
</comment>
<comment type="catalytic activity">
    <reaction evidence="3">
        <text>RX + glutathione = an S-substituted glutathione + a halide anion + H(+)</text>
        <dbReference type="Rhea" id="RHEA:16437"/>
        <dbReference type="ChEBI" id="CHEBI:15378"/>
        <dbReference type="ChEBI" id="CHEBI:16042"/>
        <dbReference type="ChEBI" id="CHEBI:17792"/>
        <dbReference type="ChEBI" id="CHEBI:57925"/>
        <dbReference type="ChEBI" id="CHEBI:90779"/>
        <dbReference type="EC" id="2.5.1.18"/>
    </reaction>
</comment>
<comment type="biophysicochemical properties">
    <kinetics>
        <KM evidence="3">1.43 mM for glutathione</KM>
        <KM evidence="3">2.98 mM for 1-chloro-2,4-dinitrobenzene</KM>
        <Vmax evidence="3">9.9 umol/min/mg enzyme with 1-chloro-2,4-dinitrobenzene as substrate</Vmax>
        <Vmax evidence="3">1.48 umol/min/mg enzyme with 4-hydroxy-2-nonenal as substrate</Vmax>
        <Vmax evidence="3">3.5 nmol/min/mg enzyme with adrenochrome as substrate</Vmax>
        <Vmax evidence="3">0.203 umol/min/mg enzyme with phenethyl isothiocyanate as substrate</Vmax>
        <Vmax evidence="3">0.165 umol/min/mg enzyme with 2-hydroxyethyl disulfide as substrate</Vmax>
    </kinetics>
</comment>
<comment type="subunit">
    <text evidence="2">Homodimer.</text>
</comment>
<comment type="similarity">
    <text evidence="4">Belongs to the GST superfamily. Delta family.</text>
</comment>